<keyword id="KW-0032">Aminotransferase</keyword>
<keyword id="KW-0093">Biotin biosynthesis</keyword>
<keyword id="KW-0963">Cytoplasm</keyword>
<keyword id="KW-0663">Pyridoxal phosphate</keyword>
<keyword id="KW-1185">Reference proteome</keyword>
<keyword id="KW-0949">S-adenosyl-L-methionine</keyword>
<keyword id="KW-0808">Transferase</keyword>
<sequence length="452" mass="51404">MNYTQQLKQKDSEYVWHPFTQMGVYSKEEAIIIEKGKGSYLYDTNGNKYLDGYASLWVNVHGHNNKYLNKVIKKQLNKIAHSTLLGSSNIPSIELAEKLIEITPSNLRKVFYSDTGSASVEIAIKMAYQYWKNIDREKYAKKNKFITLNHGYHGDTIGAVSVGGIKTFHKIFKDLIFENIQVESPSFYRSNYDTENEMMTAILTNIEQILIERNDEIAGFILEPLIQGATGLFVHPKGFLKEVEKLCKKYDVLLICDEVAVGFGRTGKMFACNHEDVQPDIMCLGKAITGGYLPLAATLTSKKIYNAFLSDSHGVNTFFHGHTYTGNQIVCTVALENIRLYEKRKLLSHIETTSSTLEKQLHALKRHRNVGDVRGRGLMFGVELVTDKDSKTPLEIEKVERIVRNCKENGLMIRNLENVITFVPVLSMSNKEVKTMVRIFKKAVHNILDRKC</sequence>
<protein>
    <recommendedName>
        <fullName evidence="1">Adenosylmethionine-8-amino-7-oxononanoate aminotransferase</fullName>
        <ecNumber evidence="1">2.6.1.62</ecNumber>
    </recommendedName>
    <alternativeName>
        <fullName evidence="1">7,8-diamino-pelargonic acid aminotransferase</fullName>
        <shortName evidence="1">DAPA AT</shortName>
        <shortName evidence="1">DAPA aminotransferase</shortName>
    </alternativeName>
    <alternativeName>
        <fullName evidence="1">7,8-diaminononanoate synthase</fullName>
        <shortName evidence="1">DANS</shortName>
    </alternativeName>
    <alternativeName>
        <fullName evidence="1">Diaminopelargonic acid synthase</fullName>
    </alternativeName>
</protein>
<accession>Q2FVJ6</accession>
<name>BIOA_STAA8</name>
<gene>
    <name evidence="1" type="primary">bioA</name>
    <name type="ordered locus">SAOUHSC_02715</name>
</gene>
<proteinExistence type="inferred from homology"/>
<reference key="1">
    <citation type="book" date="2006" name="Gram positive pathogens, 2nd edition">
        <title>The Staphylococcus aureus NCTC 8325 genome.</title>
        <editorList>
            <person name="Fischetti V."/>
            <person name="Novick R."/>
            <person name="Ferretti J."/>
            <person name="Portnoy D."/>
            <person name="Rood J."/>
        </editorList>
        <authorList>
            <person name="Gillaspy A.F."/>
            <person name="Worrell V."/>
            <person name="Orvis J."/>
            <person name="Roe B.A."/>
            <person name="Dyer D.W."/>
            <person name="Iandolo J.J."/>
        </authorList>
    </citation>
    <scope>NUCLEOTIDE SEQUENCE [LARGE SCALE GENOMIC DNA]</scope>
    <source>
        <strain>NCTC 8325 / PS 47</strain>
    </source>
</reference>
<evidence type="ECO:0000255" key="1">
    <source>
        <dbReference type="HAMAP-Rule" id="MF_00834"/>
    </source>
</evidence>
<comment type="function">
    <text evidence="1">Catalyzes the transfer of the alpha-amino group from S-adenosyl-L-methionine (SAM) to 7-keto-8-aminopelargonic acid (KAPA) to form 7,8-diaminopelargonic acid (DAPA). It is the only aminotransferase known to utilize SAM as an amino donor.</text>
</comment>
<comment type="catalytic activity">
    <reaction evidence="1">
        <text>(8S)-8-amino-7-oxononanoate + S-adenosyl-L-methionine = S-adenosyl-4-methylsulfanyl-2-oxobutanoate + (7R,8S)-7,8-diammoniononanoate</text>
        <dbReference type="Rhea" id="RHEA:16861"/>
        <dbReference type="ChEBI" id="CHEBI:16490"/>
        <dbReference type="ChEBI" id="CHEBI:59789"/>
        <dbReference type="ChEBI" id="CHEBI:149468"/>
        <dbReference type="ChEBI" id="CHEBI:149469"/>
        <dbReference type="EC" id="2.6.1.62"/>
    </reaction>
</comment>
<comment type="cofactor">
    <cofactor evidence="1">
        <name>pyridoxal 5'-phosphate</name>
        <dbReference type="ChEBI" id="CHEBI:597326"/>
    </cofactor>
</comment>
<comment type="pathway">
    <text evidence="1">Cofactor biosynthesis; biotin biosynthesis; 7,8-diaminononanoate from 8-amino-7-oxononanoate (SAM route): step 1/1.</text>
</comment>
<comment type="subunit">
    <text evidence="1">Homodimer.</text>
</comment>
<comment type="subcellular location">
    <subcellularLocation>
        <location evidence="1">Cytoplasm</location>
    </subcellularLocation>
</comment>
<comment type="similarity">
    <text evidence="1">Belongs to the class-III pyridoxal-phosphate-dependent aminotransferase family. BioA subfamily.</text>
</comment>
<dbReference type="EC" id="2.6.1.62" evidence="1"/>
<dbReference type="EMBL" id="CP000253">
    <property type="protein sequence ID" value="ABD31723.1"/>
    <property type="molecule type" value="Genomic_DNA"/>
</dbReference>
<dbReference type="RefSeq" id="WP_001110064.1">
    <property type="nucleotide sequence ID" value="NZ_LS483365.1"/>
</dbReference>
<dbReference type="RefSeq" id="YP_501177.1">
    <property type="nucleotide sequence ID" value="NC_007795.1"/>
</dbReference>
<dbReference type="SMR" id="Q2FVJ6"/>
<dbReference type="STRING" id="93061.SAOUHSC_02715"/>
<dbReference type="PaxDb" id="1280-SAXN108_2682"/>
<dbReference type="GeneID" id="3919734"/>
<dbReference type="KEGG" id="sao:SAOUHSC_02715"/>
<dbReference type="PATRIC" id="fig|93061.5.peg.2459"/>
<dbReference type="eggNOG" id="COG0161">
    <property type="taxonomic scope" value="Bacteria"/>
</dbReference>
<dbReference type="HOGENOM" id="CLU_016922_4_3_9"/>
<dbReference type="OrthoDB" id="9807885at2"/>
<dbReference type="UniPathway" id="UPA00078">
    <property type="reaction ID" value="UER00160"/>
</dbReference>
<dbReference type="PRO" id="PR:Q2FVJ6"/>
<dbReference type="Proteomes" id="UP000008816">
    <property type="component" value="Chromosome"/>
</dbReference>
<dbReference type="GO" id="GO:0005737">
    <property type="term" value="C:cytoplasm"/>
    <property type="evidence" value="ECO:0007669"/>
    <property type="project" value="UniProtKB-SubCell"/>
</dbReference>
<dbReference type="GO" id="GO:0004015">
    <property type="term" value="F:adenosylmethionine-8-amino-7-oxononanoate transaminase activity"/>
    <property type="evidence" value="ECO:0000318"/>
    <property type="project" value="GO_Central"/>
</dbReference>
<dbReference type="GO" id="GO:0030170">
    <property type="term" value="F:pyridoxal phosphate binding"/>
    <property type="evidence" value="ECO:0007669"/>
    <property type="project" value="UniProtKB-UniRule"/>
</dbReference>
<dbReference type="GO" id="GO:0009102">
    <property type="term" value="P:biotin biosynthetic process"/>
    <property type="evidence" value="ECO:0000318"/>
    <property type="project" value="GO_Central"/>
</dbReference>
<dbReference type="CDD" id="cd00610">
    <property type="entry name" value="OAT_like"/>
    <property type="match status" value="1"/>
</dbReference>
<dbReference type="FunFam" id="3.40.640.10:FF:000078">
    <property type="entry name" value="Adenosylmethionine-8-amino-7-oxononanoate aminotransferase"/>
    <property type="match status" value="1"/>
</dbReference>
<dbReference type="Gene3D" id="3.90.1150.10">
    <property type="entry name" value="Aspartate Aminotransferase, domain 1"/>
    <property type="match status" value="1"/>
</dbReference>
<dbReference type="Gene3D" id="3.40.640.10">
    <property type="entry name" value="Type I PLP-dependent aspartate aminotransferase-like (Major domain)"/>
    <property type="match status" value="1"/>
</dbReference>
<dbReference type="HAMAP" id="MF_00834">
    <property type="entry name" value="BioA"/>
    <property type="match status" value="1"/>
</dbReference>
<dbReference type="InterPro" id="IPR005814">
    <property type="entry name" value="Aminotrans_3"/>
</dbReference>
<dbReference type="InterPro" id="IPR049704">
    <property type="entry name" value="Aminotrans_3_PPA_site"/>
</dbReference>
<dbReference type="InterPro" id="IPR005815">
    <property type="entry name" value="BioA"/>
</dbReference>
<dbReference type="InterPro" id="IPR015424">
    <property type="entry name" value="PyrdxlP-dep_Trfase"/>
</dbReference>
<dbReference type="InterPro" id="IPR015421">
    <property type="entry name" value="PyrdxlP-dep_Trfase_major"/>
</dbReference>
<dbReference type="InterPro" id="IPR015422">
    <property type="entry name" value="PyrdxlP-dep_Trfase_small"/>
</dbReference>
<dbReference type="NCBIfam" id="TIGR00508">
    <property type="entry name" value="bioA"/>
    <property type="match status" value="1"/>
</dbReference>
<dbReference type="PANTHER" id="PTHR42684">
    <property type="entry name" value="ADENOSYLMETHIONINE-8-AMINO-7-OXONONANOATE AMINOTRANSFERASE"/>
    <property type="match status" value="1"/>
</dbReference>
<dbReference type="PANTHER" id="PTHR42684:SF17">
    <property type="entry name" value="ADENOSYLMETHIONINE-8-AMINO-7-OXONONANOATE AMINOTRANSFERASE"/>
    <property type="match status" value="1"/>
</dbReference>
<dbReference type="Pfam" id="PF00202">
    <property type="entry name" value="Aminotran_3"/>
    <property type="match status" value="1"/>
</dbReference>
<dbReference type="PIRSF" id="PIRSF000521">
    <property type="entry name" value="Transaminase_4ab_Lys_Orn"/>
    <property type="match status" value="1"/>
</dbReference>
<dbReference type="SUPFAM" id="SSF53383">
    <property type="entry name" value="PLP-dependent transferases"/>
    <property type="match status" value="1"/>
</dbReference>
<dbReference type="PROSITE" id="PS00600">
    <property type="entry name" value="AA_TRANSFER_CLASS_3"/>
    <property type="match status" value="1"/>
</dbReference>
<organism>
    <name type="scientific">Staphylococcus aureus (strain NCTC 8325 / PS 47)</name>
    <dbReference type="NCBI Taxonomy" id="93061"/>
    <lineage>
        <taxon>Bacteria</taxon>
        <taxon>Bacillati</taxon>
        <taxon>Bacillota</taxon>
        <taxon>Bacilli</taxon>
        <taxon>Bacillales</taxon>
        <taxon>Staphylococcaceae</taxon>
        <taxon>Staphylococcus</taxon>
    </lineage>
</organism>
<feature type="chain" id="PRO_0000411124" description="Adenosylmethionine-8-amino-7-oxononanoate aminotransferase">
    <location>
        <begin position="1"/>
        <end position="452"/>
    </location>
</feature>
<feature type="binding site" evidence="1">
    <location>
        <begin position="116"/>
        <end position="117"/>
    </location>
    <ligand>
        <name>pyridoxal 5'-phosphate</name>
        <dbReference type="ChEBI" id="CHEBI:597326"/>
    </ligand>
</feature>
<feature type="binding site" evidence="1">
    <location>
        <position position="152"/>
    </location>
    <ligand>
        <name>substrate</name>
    </ligand>
</feature>
<feature type="binding site" evidence="1">
    <location>
        <position position="257"/>
    </location>
    <ligand>
        <name>pyridoxal 5'-phosphate</name>
        <dbReference type="ChEBI" id="CHEBI:597326"/>
    </ligand>
</feature>
<feature type="binding site" evidence="1">
    <location>
        <position position="286"/>
    </location>
    <ligand>
        <name>substrate</name>
    </ligand>
</feature>
<feature type="binding site" evidence="1">
    <location>
        <position position="321"/>
    </location>
    <ligand>
        <name>substrate</name>
    </ligand>
</feature>
<feature type="binding site" evidence="1">
    <location>
        <position position="414"/>
    </location>
    <ligand>
        <name>substrate</name>
    </ligand>
</feature>
<feature type="site" description="Participates in the substrate recognition with KAPA and in a stacking interaction with the adenine ring of SAM" evidence="1">
    <location>
        <position position="19"/>
    </location>
</feature>
<feature type="modified residue" description="N6-(pyridoxal phosphate)lysine" evidence="1">
    <location>
        <position position="286"/>
    </location>
</feature>